<name>SSUB_PSEPU</name>
<dbReference type="EC" id="7.6.2.14" evidence="1"/>
<dbReference type="EMBL" id="AF075709">
    <property type="protein sequence ID" value="AAC31907.1"/>
    <property type="molecule type" value="Genomic_DNA"/>
</dbReference>
<dbReference type="EMBL" id="AB086390">
    <property type="protein sequence ID" value="BAC00975.1"/>
    <property type="molecule type" value="Genomic_DNA"/>
</dbReference>
<dbReference type="RefSeq" id="WP_013970450.1">
    <property type="nucleotide sequence ID" value="NZ_RJAI01000049.1"/>
</dbReference>
<dbReference type="SMR" id="Q8KZQ6"/>
<dbReference type="TCDB" id="3.A.1.17.2">
    <property type="family name" value="the atp-binding cassette (abc) superfamily"/>
</dbReference>
<dbReference type="GeneID" id="97165748"/>
<dbReference type="eggNOG" id="COG1116">
    <property type="taxonomic scope" value="Bacteria"/>
</dbReference>
<dbReference type="OrthoDB" id="9802264at2"/>
<dbReference type="GO" id="GO:0005886">
    <property type="term" value="C:plasma membrane"/>
    <property type="evidence" value="ECO:0007669"/>
    <property type="project" value="UniProtKB-SubCell"/>
</dbReference>
<dbReference type="GO" id="GO:0005524">
    <property type="term" value="F:ATP binding"/>
    <property type="evidence" value="ECO:0007669"/>
    <property type="project" value="UniProtKB-KW"/>
</dbReference>
<dbReference type="GO" id="GO:0016887">
    <property type="term" value="F:ATP hydrolysis activity"/>
    <property type="evidence" value="ECO:0007669"/>
    <property type="project" value="InterPro"/>
</dbReference>
<dbReference type="CDD" id="cd03293">
    <property type="entry name" value="ABC_NrtD_SsuB_transporters"/>
    <property type="match status" value="1"/>
</dbReference>
<dbReference type="FunFam" id="3.40.50.300:FF:000653">
    <property type="entry name" value="Aliphatic sulfonates import ATP-binding protein SsuB"/>
    <property type="match status" value="1"/>
</dbReference>
<dbReference type="Gene3D" id="3.40.50.300">
    <property type="entry name" value="P-loop containing nucleotide triphosphate hydrolases"/>
    <property type="match status" value="1"/>
</dbReference>
<dbReference type="InterPro" id="IPR003593">
    <property type="entry name" value="AAA+_ATPase"/>
</dbReference>
<dbReference type="InterPro" id="IPR003439">
    <property type="entry name" value="ABC_transporter-like_ATP-bd"/>
</dbReference>
<dbReference type="InterPro" id="IPR017871">
    <property type="entry name" value="ABC_transporter-like_CS"/>
</dbReference>
<dbReference type="InterPro" id="IPR050166">
    <property type="entry name" value="ABC_transporter_ATP-bind"/>
</dbReference>
<dbReference type="InterPro" id="IPR027417">
    <property type="entry name" value="P-loop_NTPase"/>
</dbReference>
<dbReference type="NCBIfam" id="NF008420">
    <property type="entry name" value="PRK11247.1"/>
    <property type="match status" value="1"/>
</dbReference>
<dbReference type="PANTHER" id="PTHR42788:SF17">
    <property type="entry name" value="ALIPHATIC SULFONATES IMPORT ATP-BINDING PROTEIN SSUB"/>
    <property type="match status" value="1"/>
</dbReference>
<dbReference type="PANTHER" id="PTHR42788">
    <property type="entry name" value="TAURINE IMPORT ATP-BINDING PROTEIN-RELATED"/>
    <property type="match status" value="1"/>
</dbReference>
<dbReference type="Pfam" id="PF00005">
    <property type="entry name" value="ABC_tran"/>
    <property type="match status" value="1"/>
</dbReference>
<dbReference type="SMART" id="SM00382">
    <property type="entry name" value="AAA"/>
    <property type="match status" value="1"/>
</dbReference>
<dbReference type="SUPFAM" id="SSF52540">
    <property type="entry name" value="P-loop containing nucleoside triphosphate hydrolases"/>
    <property type="match status" value="1"/>
</dbReference>
<dbReference type="PROSITE" id="PS00211">
    <property type="entry name" value="ABC_TRANSPORTER_1"/>
    <property type="match status" value="1"/>
</dbReference>
<dbReference type="PROSITE" id="PS50893">
    <property type="entry name" value="ABC_TRANSPORTER_2"/>
    <property type="match status" value="1"/>
</dbReference>
<dbReference type="PROSITE" id="PS51291">
    <property type="entry name" value="SSUB"/>
    <property type="match status" value="1"/>
</dbReference>
<evidence type="ECO:0000255" key="1">
    <source>
        <dbReference type="HAMAP-Rule" id="MF_01724"/>
    </source>
</evidence>
<evidence type="ECO:0000256" key="2">
    <source>
        <dbReference type="SAM" id="MobiDB-lite"/>
    </source>
</evidence>
<evidence type="ECO:0000305" key="3"/>
<evidence type="ECO:0000305" key="4">
    <source>
    </source>
</evidence>
<evidence type="ECO:0000305" key="5">
    <source>
    </source>
</evidence>
<sequence>MTVLKEQPPRLLRGIPLASSGLRKTFGQREVLKGIELHIPAGQFVAIVGRSGCGKSTLLRLLAGLDQPTAGQLLAGAAPLEQAREETRLMFQDARLLPWKKVIDNVGLGLSGDWRPRALEALESVGLADRANEWPAALSGGQKQRVALARALIHQPRLLLLDEPLGALDALTRIEMQQLIERLWRQHGFTVLLVTHDVSEAVAVADRVILIEDGEVGLDLTVDLARPRARGSHRLAALESEVLNRVLSAPGAAPEPDPVAPLPTQLRWAH</sequence>
<organism>
    <name type="scientific">Pseudomonas putida</name>
    <name type="common">Arthrobacter siderocapsulatus</name>
    <dbReference type="NCBI Taxonomy" id="303"/>
    <lineage>
        <taxon>Bacteria</taxon>
        <taxon>Pseudomonadati</taxon>
        <taxon>Pseudomonadota</taxon>
        <taxon>Gammaproteobacteria</taxon>
        <taxon>Pseudomonadales</taxon>
        <taxon>Pseudomonadaceae</taxon>
        <taxon>Pseudomonas</taxon>
    </lineage>
</organism>
<feature type="chain" id="PRO_0000279935" description="Aliphatic sulfonates import ATP-binding protein SsuB">
    <location>
        <begin position="1"/>
        <end position="270"/>
    </location>
</feature>
<feature type="domain" description="ABC transporter" evidence="1">
    <location>
        <begin position="17"/>
        <end position="238"/>
    </location>
</feature>
<feature type="region of interest" description="Disordered" evidence="2">
    <location>
        <begin position="249"/>
        <end position="270"/>
    </location>
</feature>
<feature type="binding site" evidence="1">
    <location>
        <begin position="49"/>
        <end position="56"/>
    </location>
    <ligand>
        <name>ATP</name>
        <dbReference type="ChEBI" id="CHEBI:30616"/>
    </ligand>
</feature>
<feature type="sequence conflict" description="In Ref. 1; AAC31907." evidence="3" ref="1">
    <original>S</original>
    <variation>N</variation>
    <location>
        <position position="20"/>
    </location>
</feature>
<feature type="sequence conflict" description="In Ref. 1; AAC31907." evidence="3" ref="1">
    <original>K</original>
    <variation>R</variation>
    <location>
        <position position="33"/>
    </location>
</feature>
<feature type="sequence conflict" description="In Ref. 1; AAC31907." evidence="3" ref="1">
    <original>E</original>
    <variation>D</variation>
    <location>
        <position position="36"/>
    </location>
</feature>
<feature type="sequence conflict" description="In Ref. 1; AAC31907." evidence="3" ref="1">
    <original>Q</original>
    <variation>E</variation>
    <location>
        <position position="72"/>
    </location>
</feature>
<feature type="sequence conflict" description="In Ref. 1; AAC31907." evidence="3" ref="1">
    <original>EQ</original>
    <variation>AE</variation>
    <location>
        <begin position="81"/>
        <end position="82"/>
    </location>
</feature>
<feature type="sequence conflict" description="In Ref. 1; AAC31907." evidence="3" ref="1">
    <original>S</original>
    <variation>K</variation>
    <location>
        <position position="111"/>
    </location>
</feature>
<feature type="sequence conflict" description="In Ref. 1; AAC31907." evidence="3" ref="1">
    <original>P</original>
    <variation>Q</variation>
    <location>
        <position position="116"/>
    </location>
</feature>
<feature type="sequence conflict" description="In Ref. 1; AAC31907." evidence="3" ref="1">
    <original>E</original>
    <variation>D</variation>
    <location>
        <position position="120"/>
    </location>
</feature>
<feature type="sequence conflict" description="In Ref. 1; AAC31907." evidence="3" ref="1">
    <original>S</original>
    <variation>A</variation>
    <location>
        <position position="124"/>
    </location>
</feature>
<feature type="sequence conflict" description="In Ref. 1; AAC31907." evidence="3" ref="1">
    <original>S</original>
    <variation>N</variation>
    <location>
        <position position="199"/>
    </location>
</feature>
<feature type="sequence conflict" description="In Ref. 1; AAC31907." evidence="3" ref="1">
    <original>T</original>
    <variation>N</variation>
    <location>
        <position position="221"/>
    </location>
</feature>
<feature type="sequence conflict" description="In Ref. 1; AAC31907." evidence="3" ref="1">
    <original>A</original>
    <variation>V</variation>
    <location>
        <position position="249"/>
    </location>
</feature>
<feature type="sequence conflict" description="In Ref. 1; AAC31907." evidence="3" ref="1">
    <original>AA</original>
    <variation>TP</variation>
    <location>
        <begin position="252"/>
        <end position="253"/>
    </location>
</feature>
<feature type="sequence conflict" description="In Ref. 1; AAC31907." evidence="3" ref="1">
    <original>D</original>
    <variation>E</variation>
    <location>
        <position position="257"/>
    </location>
</feature>
<reference key="1">
    <citation type="journal article" date="1999" name="Mol. Microbiol.">
        <title>Genetic organization of sulphur-controlled aryl desulphonation in Pseudomonas putida S-313.</title>
        <authorList>
            <person name="Vermeij P."/>
            <person name="Wietek C."/>
            <person name="Kahnert A."/>
            <person name="Wueest T."/>
            <person name="Kertesz M.A."/>
        </authorList>
    </citation>
    <scope>NUCLEOTIDE SEQUENCE [GENOMIC DNA]</scope>
    <source>
        <strain>DSM 6884 / S-313</strain>
    </source>
</reference>
<reference key="2">
    <citation type="journal article" date="2003" name="Appl. Microbiol. Biotechnol.">
        <title>Characterization and identification of genes essential for dimethyl sulfide utilization in Pseudomonas putida strain DS1.</title>
        <authorList>
            <person name="Endoh T."/>
            <person name="Kasuga K."/>
            <person name="Horinouchi M."/>
            <person name="Yoshida T."/>
            <person name="Habe H."/>
            <person name="Nojiri H."/>
            <person name="Omori T."/>
        </authorList>
    </citation>
    <scope>NUCLEOTIDE SEQUENCE [GENOMIC DNA]</scope>
    <scope>FUNCTION IN ALIPHATIC SULFONATES TRANSPORT</scope>
    <source>
        <strain>DS1</strain>
    </source>
</reference>
<reference key="3">
    <citation type="journal article" date="2000" name="J. Bacteriol.">
        <title>The ssu locus plays a key role in organosulfur metabolism in Pseudomonas putida S-313.</title>
        <authorList>
            <person name="Kahnert A."/>
            <person name="Vermeij P."/>
            <person name="Wietek C."/>
            <person name="James P."/>
            <person name="Leisinger T."/>
            <person name="Kertesz M.A."/>
        </authorList>
    </citation>
    <scope>FUNCTION IN ALIPHATIC SULFONATES TRANSPORT</scope>
    <source>
        <strain>DSM 6884 / S-313</strain>
    </source>
</reference>
<accession>Q8KZQ6</accession>
<accession>O85766</accession>
<proteinExistence type="evidence at protein level"/>
<comment type="function">
    <text evidence="4 5">Part of the ABC transporter complex SsuABC involved in aliphatic sulfonates import. Responsible for energy coupling to the transport system (Probable).</text>
</comment>
<comment type="catalytic activity">
    <reaction evidence="1">
        <text>ATP + H2O + aliphatic sulfonate-[sulfonate-binding protein]Side 1 = ADP + phosphate + aliphatic sulfonateSide 2 + [sulfonate-binding protein]Side 1.</text>
        <dbReference type="EC" id="7.6.2.14"/>
    </reaction>
</comment>
<comment type="subunit">
    <text evidence="1">The complex is composed of two ATP-binding proteins (SsuB), two transmembrane proteins (SsuC) and a solute-binding protein (SsuA).</text>
</comment>
<comment type="subcellular location">
    <subcellularLocation>
        <location evidence="1">Cell inner membrane</location>
        <topology evidence="1">Peripheral membrane protein</topology>
    </subcellularLocation>
</comment>
<comment type="similarity">
    <text evidence="1">Belongs to the ABC transporter superfamily. Aliphatic sulfonates importer (TC 3.A.1.17.2) family.</text>
</comment>
<keyword id="KW-0067">ATP-binding</keyword>
<keyword id="KW-0997">Cell inner membrane</keyword>
<keyword id="KW-1003">Cell membrane</keyword>
<keyword id="KW-0472">Membrane</keyword>
<keyword id="KW-0547">Nucleotide-binding</keyword>
<keyword id="KW-1278">Translocase</keyword>
<keyword id="KW-0813">Transport</keyword>
<protein>
    <recommendedName>
        <fullName evidence="1">Aliphatic sulfonates import ATP-binding protein SsuB</fullName>
        <ecNumber evidence="1">7.6.2.14</ecNumber>
    </recommendedName>
</protein>
<gene>
    <name evidence="1" type="primary">ssuB</name>
</gene>